<dbReference type="EC" id="3.1.1.61" evidence="1"/>
<dbReference type="EC" id="3.5.1.44" evidence="1"/>
<dbReference type="EMBL" id="CP000509">
    <property type="protein sequence ID" value="ABL83099.1"/>
    <property type="molecule type" value="Genomic_DNA"/>
</dbReference>
<dbReference type="RefSeq" id="WP_011757030.1">
    <property type="nucleotide sequence ID" value="NC_008699.1"/>
</dbReference>
<dbReference type="SMR" id="A1SMR4"/>
<dbReference type="STRING" id="196162.Noca_3599"/>
<dbReference type="KEGG" id="nca:Noca_3599"/>
<dbReference type="eggNOG" id="COG2201">
    <property type="taxonomic scope" value="Bacteria"/>
</dbReference>
<dbReference type="HOGENOM" id="CLU_000445_51_0_11"/>
<dbReference type="OrthoDB" id="9793421at2"/>
<dbReference type="Proteomes" id="UP000000640">
    <property type="component" value="Chromosome"/>
</dbReference>
<dbReference type="GO" id="GO:0005737">
    <property type="term" value="C:cytoplasm"/>
    <property type="evidence" value="ECO:0007669"/>
    <property type="project" value="UniProtKB-SubCell"/>
</dbReference>
<dbReference type="GO" id="GO:0000156">
    <property type="term" value="F:phosphorelay response regulator activity"/>
    <property type="evidence" value="ECO:0007669"/>
    <property type="project" value="InterPro"/>
</dbReference>
<dbReference type="GO" id="GO:0008984">
    <property type="term" value="F:protein-glutamate methylesterase activity"/>
    <property type="evidence" value="ECO:0007669"/>
    <property type="project" value="UniProtKB-UniRule"/>
</dbReference>
<dbReference type="GO" id="GO:0050568">
    <property type="term" value="F:protein-glutamine glutaminase activity"/>
    <property type="evidence" value="ECO:0007669"/>
    <property type="project" value="UniProtKB-UniRule"/>
</dbReference>
<dbReference type="GO" id="GO:0006935">
    <property type="term" value="P:chemotaxis"/>
    <property type="evidence" value="ECO:0007669"/>
    <property type="project" value="UniProtKB-UniRule"/>
</dbReference>
<dbReference type="CDD" id="cd16432">
    <property type="entry name" value="CheB_Rec"/>
    <property type="match status" value="1"/>
</dbReference>
<dbReference type="CDD" id="cd17541">
    <property type="entry name" value="REC_CheB-like"/>
    <property type="match status" value="1"/>
</dbReference>
<dbReference type="Gene3D" id="3.40.50.2300">
    <property type="match status" value="1"/>
</dbReference>
<dbReference type="Gene3D" id="3.40.50.180">
    <property type="entry name" value="Methylesterase CheB, C-terminal domain"/>
    <property type="match status" value="1"/>
</dbReference>
<dbReference type="HAMAP" id="MF_00099">
    <property type="entry name" value="CheB_chemtxs"/>
    <property type="match status" value="1"/>
</dbReference>
<dbReference type="InterPro" id="IPR008248">
    <property type="entry name" value="CheB-like"/>
</dbReference>
<dbReference type="InterPro" id="IPR035909">
    <property type="entry name" value="CheB_C"/>
</dbReference>
<dbReference type="InterPro" id="IPR011006">
    <property type="entry name" value="CheY-like_superfamily"/>
</dbReference>
<dbReference type="InterPro" id="IPR000673">
    <property type="entry name" value="Sig_transdc_resp-reg_Me-estase"/>
</dbReference>
<dbReference type="InterPro" id="IPR001789">
    <property type="entry name" value="Sig_transdc_resp-reg_receiver"/>
</dbReference>
<dbReference type="NCBIfam" id="NF001965">
    <property type="entry name" value="PRK00742.1"/>
    <property type="match status" value="1"/>
</dbReference>
<dbReference type="PANTHER" id="PTHR42872">
    <property type="entry name" value="PROTEIN-GLUTAMATE METHYLESTERASE/PROTEIN-GLUTAMINE GLUTAMINASE"/>
    <property type="match status" value="1"/>
</dbReference>
<dbReference type="PANTHER" id="PTHR42872:SF3">
    <property type="entry name" value="PROTEIN-GLUTAMATE METHYLESTERASE_PROTEIN-GLUTAMINE GLUTAMINASE 1"/>
    <property type="match status" value="1"/>
</dbReference>
<dbReference type="Pfam" id="PF01339">
    <property type="entry name" value="CheB_methylest"/>
    <property type="match status" value="1"/>
</dbReference>
<dbReference type="Pfam" id="PF00072">
    <property type="entry name" value="Response_reg"/>
    <property type="match status" value="1"/>
</dbReference>
<dbReference type="PIRSF" id="PIRSF000876">
    <property type="entry name" value="RR_chemtxs_CheB"/>
    <property type="match status" value="1"/>
</dbReference>
<dbReference type="SMART" id="SM00448">
    <property type="entry name" value="REC"/>
    <property type="match status" value="1"/>
</dbReference>
<dbReference type="SUPFAM" id="SSF52172">
    <property type="entry name" value="CheY-like"/>
    <property type="match status" value="1"/>
</dbReference>
<dbReference type="SUPFAM" id="SSF52738">
    <property type="entry name" value="Methylesterase CheB, C-terminal domain"/>
    <property type="match status" value="1"/>
</dbReference>
<dbReference type="PROSITE" id="PS50122">
    <property type="entry name" value="CHEB"/>
    <property type="match status" value="1"/>
</dbReference>
<dbReference type="PROSITE" id="PS50110">
    <property type="entry name" value="RESPONSE_REGULATORY"/>
    <property type="match status" value="1"/>
</dbReference>
<feature type="chain" id="PRO_1000075591" description="Protein-glutamate methylesterase/protein-glutamine glutaminase">
    <location>
        <begin position="1"/>
        <end position="366"/>
    </location>
</feature>
<feature type="domain" description="Response regulatory" evidence="1">
    <location>
        <begin position="5"/>
        <end position="123"/>
    </location>
</feature>
<feature type="domain" description="CheB-type methylesterase" evidence="1">
    <location>
        <begin position="163"/>
        <end position="355"/>
    </location>
</feature>
<feature type="active site" evidence="1">
    <location>
        <position position="175"/>
    </location>
</feature>
<feature type="active site" evidence="1">
    <location>
        <position position="201"/>
    </location>
</feature>
<feature type="active site" evidence="1">
    <location>
        <position position="297"/>
    </location>
</feature>
<feature type="modified residue" description="4-aspartylphosphate" evidence="1">
    <location>
        <position position="56"/>
    </location>
</feature>
<evidence type="ECO:0000255" key="1">
    <source>
        <dbReference type="HAMAP-Rule" id="MF_00099"/>
    </source>
</evidence>
<reference key="1">
    <citation type="submission" date="2006-12" db="EMBL/GenBank/DDBJ databases">
        <title>Complete sequence of chromosome 1 of Nocardioides sp. JS614.</title>
        <authorList>
            <person name="Copeland A."/>
            <person name="Lucas S."/>
            <person name="Lapidus A."/>
            <person name="Barry K."/>
            <person name="Detter J.C."/>
            <person name="Glavina del Rio T."/>
            <person name="Hammon N."/>
            <person name="Israni S."/>
            <person name="Dalin E."/>
            <person name="Tice H."/>
            <person name="Pitluck S."/>
            <person name="Thompson L.S."/>
            <person name="Brettin T."/>
            <person name="Bruce D."/>
            <person name="Han C."/>
            <person name="Tapia R."/>
            <person name="Schmutz J."/>
            <person name="Larimer F."/>
            <person name="Land M."/>
            <person name="Hauser L."/>
            <person name="Kyrpides N."/>
            <person name="Kim E."/>
            <person name="Mattes T."/>
            <person name="Gossett J."/>
            <person name="Richardson P."/>
        </authorList>
    </citation>
    <scope>NUCLEOTIDE SEQUENCE [LARGE SCALE GENOMIC DNA]</scope>
    <source>
        <strain>ATCC BAA-499 / JS614</strain>
    </source>
</reference>
<comment type="function">
    <text evidence="1">Involved in chemotaxis. Part of a chemotaxis signal transduction system that modulates chemotaxis in response to various stimuli. Catalyzes the demethylation of specific methylglutamate residues introduced into the chemoreceptors (methyl-accepting chemotaxis proteins or MCP) by CheR. Also mediates the irreversible deamidation of specific glutamine residues to glutamic acid.</text>
</comment>
<comment type="catalytic activity">
    <reaction evidence="1">
        <text>[protein]-L-glutamate 5-O-methyl ester + H2O = L-glutamyl-[protein] + methanol + H(+)</text>
        <dbReference type="Rhea" id="RHEA:23236"/>
        <dbReference type="Rhea" id="RHEA-COMP:10208"/>
        <dbReference type="Rhea" id="RHEA-COMP:10311"/>
        <dbReference type="ChEBI" id="CHEBI:15377"/>
        <dbReference type="ChEBI" id="CHEBI:15378"/>
        <dbReference type="ChEBI" id="CHEBI:17790"/>
        <dbReference type="ChEBI" id="CHEBI:29973"/>
        <dbReference type="ChEBI" id="CHEBI:82795"/>
        <dbReference type="EC" id="3.1.1.61"/>
    </reaction>
</comment>
<comment type="catalytic activity">
    <reaction evidence="1">
        <text>L-glutaminyl-[protein] + H2O = L-glutamyl-[protein] + NH4(+)</text>
        <dbReference type="Rhea" id="RHEA:16441"/>
        <dbReference type="Rhea" id="RHEA-COMP:10207"/>
        <dbReference type="Rhea" id="RHEA-COMP:10208"/>
        <dbReference type="ChEBI" id="CHEBI:15377"/>
        <dbReference type="ChEBI" id="CHEBI:28938"/>
        <dbReference type="ChEBI" id="CHEBI:29973"/>
        <dbReference type="ChEBI" id="CHEBI:30011"/>
        <dbReference type="EC" id="3.5.1.44"/>
    </reaction>
</comment>
<comment type="subcellular location">
    <subcellularLocation>
        <location evidence="1">Cytoplasm</location>
    </subcellularLocation>
</comment>
<comment type="domain">
    <text evidence="1">Contains a C-terminal catalytic domain, and an N-terminal region which modulates catalytic activity.</text>
</comment>
<comment type="PTM">
    <text evidence="1">Phosphorylated by CheA. Phosphorylation of the N-terminal regulatory domain activates the methylesterase activity.</text>
</comment>
<comment type="similarity">
    <text evidence="1">Belongs to the CheB family.</text>
</comment>
<gene>
    <name evidence="1" type="primary">cheB</name>
    <name type="ordered locus">Noca_3599</name>
</gene>
<protein>
    <recommendedName>
        <fullName evidence="1">Protein-glutamate methylesterase/protein-glutamine glutaminase</fullName>
        <ecNumber evidence="1">3.1.1.61</ecNumber>
        <ecNumber evidence="1">3.5.1.44</ecNumber>
    </recommendedName>
</protein>
<organism>
    <name type="scientific">Nocardioides sp. (strain ATCC BAA-499 / JS614)</name>
    <dbReference type="NCBI Taxonomy" id="196162"/>
    <lineage>
        <taxon>Bacteria</taxon>
        <taxon>Bacillati</taxon>
        <taxon>Actinomycetota</taxon>
        <taxon>Actinomycetes</taxon>
        <taxon>Propionibacteriales</taxon>
        <taxon>Nocardioidaceae</taxon>
        <taxon>Nocardioides</taxon>
    </lineage>
</organism>
<name>CHEB_NOCSJ</name>
<keyword id="KW-0145">Chemotaxis</keyword>
<keyword id="KW-0963">Cytoplasm</keyword>
<keyword id="KW-0378">Hydrolase</keyword>
<keyword id="KW-0597">Phosphoprotein</keyword>
<keyword id="KW-1185">Reference proteome</keyword>
<proteinExistence type="inferred from homology"/>
<accession>A1SMR4</accession>
<sequence>MPGIRVLVVDDSVVIRKLVSDLLSADPDIEVVGTAVNGRAALQKVAQLRPDLVTMDIEMPEMDGIESVRAIRATGNKVPIIMFSTLTERGAVATLDALGAGASDYVPKPANVGSVGRSMEQVREALIPRIKSLVPRRGITPHPAGVTVAPTATVQLHAPATPPLGGHRLLVIGSSTGGPEALSALLHTLPPLSVPVAVVQHMPPLFTRQFAARLDRQLPYDVVEAEHNQPLRPGTVAIAPGDYHLEVTTDAAGLRTRLTQAPPENYCRPAVDVLFRSAVAAVGPAVLAAVLTGMGSDGCKGARLIVERGGSVLAQDQATSVVWGMPGAVATAGLAERVLPLLELGPEILRRLARQRPSLVPAGALS</sequence>